<reference key="1">
    <citation type="journal article" date="2004" name="Mol. Plant Microbe Interact.">
        <title>The genome sequence of the Gram-positive sugarcane pathogen Leifsonia xyli subsp. xyli.</title>
        <authorList>
            <person name="Monteiro-Vitorello C.B."/>
            <person name="Camargo L.E.A."/>
            <person name="Van Sluys M.A."/>
            <person name="Kitajima J.P."/>
            <person name="Truffi D."/>
            <person name="do Amaral A.M."/>
            <person name="Harakava R."/>
            <person name="de Oliveira J.C.F."/>
            <person name="Wood D."/>
            <person name="de Oliveira M.C."/>
            <person name="Miyaki C.Y."/>
            <person name="Takita M.A."/>
            <person name="da Silva A.C.R."/>
            <person name="Furlan L.R."/>
            <person name="Carraro D.M."/>
            <person name="Camarotte G."/>
            <person name="Almeida N.F. Jr."/>
            <person name="Carrer H."/>
            <person name="Coutinho L.L."/>
            <person name="El-Dorry H.A."/>
            <person name="Ferro M.I.T."/>
            <person name="Gagliardi P.R."/>
            <person name="Giglioti E."/>
            <person name="Goldman M.H.S."/>
            <person name="Goldman G.H."/>
            <person name="Kimura E.T."/>
            <person name="Ferro E.S."/>
            <person name="Kuramae E.E."/>
            <person name="Lemos E.G.M."/>
            <person name="Lemos M.V.F."/>
            <person name="Mauro S.M.Z."/>
            <person name="Machado M.A."/>
            <person name="Marino C.L."/>
            <person name="Menck C.F."/>
            <person name="Nunes L.R."/>
            <person name="Oliveira R.C."/>
            <person name="Pereira G.G."/>
            <person name="Siqueira W."/>
            <person name="de Souza A.A."/>
            <person name="Tsai S.M."/>
            <person name="Zanca A.S."/>
            <person name="Simpson A.J.G."/>
            <person name="Brumbley S.M."/>
            <person name="Setubal J.C."/>
        </authorList>
    </citation>
    <scope>NUCLEOTIDE SEQUENCE [LARGE SCALE GENOMIC DNA]</scope>
    <source>
        <strain>CTCB07</strain>
    </source>
</reference>
<proteinExistence type="inferred from homology"/>
<name>RL1_LEIXX</name>
<dbReference type="EMBL" id="AE016822">
    <property type="protein sequence ID" value="AAT88320.1"/>
    <property type="molecule type" value="Genomic_DNA"/>
</dbReference>
<dbReference type="RefSeq" id="WP_011185323.1">
    <property type="nucleotide sequence ID" value="NC_006087.1"/>
</dbReference>
<dbReference type="SMR" id="Q6AH25"/>
<dbReference type="STRING" id="281090.Lxx02920"/>
<dbReference type="KEGG" id="lxx:Lxx02920"/>
<dbReference type="eggNOG" id="COG0081">
    <property type="taxonomic scope" value="Bacteria"/>
</dbReference>
<dbReference type="HOGENOM" id="CLU_062853_0_0_11"/>
<dbReference type="Proteomes" id="UP000001306">
    <property type="component" value="Chromosome"/>
</dbReference>
<dbReference type="GO" id="GO:0015934">
    <property type="term" value="C:large ribosomal subunit"/>
    <property type="evidence" value="ECO:0007669"/>
    <property type="project" value="InterPro"/>
</dbReference>
<dbReference type="GO" id="GO:0019843">
    <property type="term" value="F:rRNA binding"/>
    <property type="evidence" value="ECO:0007669"/>
    <property type="project" value="UniProtKB-UniRule"/>
</dbReference>
<dbReference type="GO" id="GO:0003735">
    <property type="term" value="F:structural constituent of ribosome"/>
    <property type="evidence" value="ECO:0007669"/>
    <property type="project" value="InterPro"/>
</dbReference>
<dbReference type="GO" id="GO:0000049">
    <property type="term" value="F:tRNA binding"/>
    <property type="evidence" value="ECO:0007669"/>
    <property type="project" value="UniProtKB-KW"/>
</dbReference>
<dbReference type="GO" id="GO:0006417">
    <property type="term" value="P:regulation of translation"/>
    <property type="evidence" value="ECO:0007669"/>
    <property type="project" value="UniProtKB-KW"/>
</dbReference>
<dbReference type="GO" id="GO:0006412">
    <property type="term" value="P:translation"/>
    <property type="evidence" value="ECO:0007669"/>
    <property type="project" value="UniProtKB-UniRule"/>
</dbReference>
<dbReference type="CDD" id="cd00403">
    <property type="entry name" value="Ribosomal_L1"/>
    <property type="match status" value="1"/>
</dbReference>
<dbReference type="FunFam" id="3.40.50.790:FF:000001">
    <property type="entry name" value="50S ribosomal protein L1"/>
    <property type="match status" value="1"/>
</dbReference>
<dbReference type="Gene3D" id="3.30.190.20">
    <property type="match status" value="1"/>
</dbReference>
<dbReference type="Gene3D" id="3.40.50.790">
    <property type="match status" value="1"/>
</dbReference>
<dbReference type="HAMAP" id="MF_01318_B">
    <property type="entry name" value="Ribosomal_uL1_B"/>
    <property type="match status" value="1"/>
</dbReference>
<dbReference type="InterPro" id="IPR005878">
    <property type="entry name" value="Ribosom_uL1_bac-type"/>
</dbReference>
<dbReference type="InterPro" id="IPR002143">
    <property type="entry name" value="Ribosomal_uL1"/>
</dbReference>
<dbReference type="InterPro" id="IPR023674">
    <property type="entry name" value="Ribosomal_uL1-like"/>
</dbReference>
<dbReference type="InterPro" id="IPR028364">
    <property type="entry name" value="Ribosomal_uL1/biogenesis"/>
</dbReference>
<dbReference type="InterPro" id="IPR016095">
    <property type="entry name" value="Ribosomal_uL1_3-a/b-sand"/>
</dbReference>
<dbReference type="InterPro" id="IPR023673">
    <property type="entry name" value="Ribosomal_uL1_CS"/>
</dbReference>
<dbReference type="NCBIfam" id="TIGR01169">
    <property type="entry name" value="rplA_bact"/>
    <property type="match status" value="1"/>
</dbReference>
<dbReference type="PANTHER" id="PTHR36427">
    <property type="entry name" value="54S RIBOSOMAL PROTEIN L1, MITOCHONDRIAL"/>
    <property type="match status" value="1"/>
</dbReference>
<dbReference type="PANTHER" id="PTHR36427:SF3">
    <property type="entry name" value="LARGE RIBOSOMAL SUBUNIT PROTEIN UL1M"/>
    <property type="match status" value="1"/>
</dbReference>
<dbReference type="Pfam" id="PF00687">
    <property type="entry name" value="Ribosomal_L1"/>
    <property type="match status" value="1"/>
</dbReference>
<dbReference type="PIRSF" id="PIRSF002155">
    <property type="entry name" value="Ribosomal_L1"/>
    <property type="match status" value="1"/>
</dbReference>
<dbReference type="SUPFAM" id="SSF56808">
    <property type="entry name" value="Ribosomal protein L1"/>
    <property type="match status" value="1"/>
</dbReference>
<dbReference type="PROSITE" id="PS01199">
    <property type="entry name" value="RIBOSOMAL_L1"/>
    <property type="match status" value="1"/>
</dbReference>
<feature type="chain" id="PRO_0000125676" description="Large ribosomal subunit protein uL1">
    <location>
        <begin position="1"/>
        <end position="229"/>
    </location>
</feature>
<accession>Q6AH25</accession>
<gene>
    <name evidence="1" type="primary">rplA</name>
    <name type="ordered locus">Lxx02920</name>
</gene>
<keyword id="KW-1185">Reference proteome</keyword>
<keyword id="KW-0678">Repressor</keyword>
<keyword id="KW-0687">Ribonucleoprotein</keyword>
<keyword id="KW-0689">Ribosomal protein</keyword>
<keyword id="KW-0694">RNA-binding</keyword>
<keyword id="KW-0699">rRNA-binding</keyword>
<keyword id="KW-0810">Translation regulation</keyword>
<keyword id="KW-0820">tRNA-binding</keyword>
<protein>
    <recommendedName>
        <fullName evidence="1">Large ribosomal subunit protein uL1</fullName>
    </recommendedName>
    <alternativeName>
        <fullName evidence="2">50S ribosomal protein L1</fullName>
    </alternativeName>
</protein>
<sequence length="229" mass="23789">MAQKSKAYRAAAEKIEAGKYYTPTEAVALAKETGSAKFNSTVEVALKLGVDPRKADQMVRGTVILPHGTGKTARVIVFATGPAAEAAIAAGADEVGGSDLIEKVAGGYTDFDSAVSTPELMGQVGRLGKVLGPRGLMPNPKTGTVTPDVAKAVFDIKGGKIEFRVDKHANVHFVVGKAGFTADQLNDNIKVALDEVVRLKPSAAKGRYIQKGAVSTTFGPGIPLDVNAI</sequence>
<organism>
    <name type="scientific">Leifsonia xyli subsp. xyli (strain CTCB07)</name>
    <dbReference type="NCBI Taxonomy" id="281090"/>
    <lineage>
        <taxon>Bacteria</taxon>
        <taxon>Bacillati</taxon>
        <taxon>Actinomycetota</taxon>
        <taxon>Actinomycetes</taxon>
        <taxon>Micrococcales</taxon>
        <taxon>Microbacteriaceae</taxon>
        <taxon>Leifsonia</taxon>
    </lineage>
</organism>
<evidence type="ECO:0000255" key="1">
    <source>
        <dbReference type="HAMAP-Rule" id="MF_01318"/>
    </source>
</evidence>
<evidence type="ECO:0000305" key="2"/>
<comment type="function">
    <text evidence="1">Binds directly to 23S rRNA. The L1 stalk is quite mobile in the ribosome, and is involved in E site tRNA release.</text>
</comment>
<comment type="function">
    <text evidence="1">Protein L1 is also a translational repressor protein, it controls the translation of the L11 operon by binding to its mRNA.</text>
</comment>
<comment type="subunit">
    <text evidence="1">Part of the 50S ribosomal subunit.</text>
</comment>
<comment type="similarity">
    <text evidence="1">Belongs to the universal ribosomal protein uL1 family.</text>
</comment>